<organism>
    <name type="scientific">Prochlorococcus marinus (strain MIT 9313)</name>
    <dbReference type="NCBI Taxonomy" id="74547"/>
    <lineage>
        <taxon>Bacteria</taxon>
        <taxon>Bacillati</taxon>
        <taxon>Cyanobacteriota</taxon>
        <taxon>Cyanophyceae</taxon>
        <taxon>Synechococcales</taxon>
        <taxon>Prochlorococcaceae</taxon>
        <taxon>Prochlorococcus</taxon>
    </lineage>
</organism>
<sequence length="243" mass="27179">MPTLEMPVAAVLDSTVGSSEALPDFTSDRYKDAYSRINAIVIEGEQEAHDNYIAIGTLLPDHVEELKRLAKMEMRHKKGFTACGKNLGVEADMDFAREFFAPLRDNFQTALGQGKTPTCLLIQALLIEAFAISAYHTYIPVSDPFARKITEGVVKDEYTHLNYGEAWLKANLESCREELLEANRENLPLIRRMLDQVAGDAAVLQMDKEDLIEDFLIAYQESLTEIGFNTREITRMAAAALVS</sequence>
<feature type="chain" id="PRO_0000418904" description="Aldehyde decarbonylase">
    <location>
        <begin position="1"/>
        <end position="243"/>
    </location>
</feature>
<feature type="binding site" evidence="1 3">
    <location>
        <position position="45"/>
    </location>
    <ligand>
        <name>Fe cation</name>
        <dbReference type="ChEBI" id="CHEBI:24875"/>
        <label>1</label>
    </ligand>
</feature>
<feature type="binding site" evidence="1 3">
    <location>
        <position position="73"/>
    </location>
    <ligand>
        <name>Fe cation</name>
        <dbReference type="ChEBI" id="CHEBI:24875"/>
        <label>1</label>
    </ligand>
</feature>
<feature type="binding site" evidence="1 3">
    <location>
        <position position="73"/>
    </location>
    <ligand>
        <name>Fe cation</name>
        <dbReference type="ChEBI" id="CHEBI:24875"/>
        <label>2</label>
    </ligand>
</feature>
<feature type="binding site" evidence="1 3">
    <location>
        <position position="76"/>
    </location>
    <ligand>
        <name>Fe cation</name>
        <dbReference type="ChEBI" id="CHEBI:24875"/>
        <label>1</label>
    </ligand>
</feature>
<feature type="binding site" evidence="1 3">
    <location>
        <position position="128"/>
    </location>
    <ligand>
        <name>Fe cation</name>
        <dbReference type="ChEBI" id="CHEBI:24875"/>
        <label>2</label>
    </ligand>
</feature>
<feature type="binding site" evidence="1 3">
    <location>
        <position position="160"/>
    </location>
    <ligand>
        <name>Fe cation</name>
        <dbReference type="ChEBI" id="CHEBI:24875"/>
        <label>2</label>
    </ligand>
</feature>
<feature type="helix" evidence="4">
    <location>
        <begin position="28"/>
        <end position="58"/>
    </location>
</feature>
<feature type="helix" evidence="4">
    <location>
        <begin position="60"/>
        <end position="62"/>
    </location>
</feature>
<feature type="helix" evidence="4">
    <location>
        <begin position="63"/>
        <end position="86"/>
    </location>
</feature>
<feature type="helix" evidence="4">
    <location>
        <begin position="93"/>
        <end position="112"/>
    </location>
</feature>
<feature type="helix" evidence="4">
    <location>
        <begin position="116"/>
        <end position="123"/>
    </location>
</feature>
<feature type="helix" evidence="4">
    <location>
        <begin position="126"/>
        <end position="138"/>
    </location>
</feature>
<feature type="helix" evidence="4">
    <location>
        <begin position="139"/>
        <end position="141"/>
    </location>
</feature>
<feature type="helix" evidence="4">
    <location>
        <begin position="144"/>
        <end position="203"/>
    </location>
</feature>
<feature type="helix" evidence="4">
    <location>
        <begin position="208"/>
        <end position="226"/>
    </location>
</feature>
<feature type="helix" evidence="4">
    <location>
        <begin position="230"/>
        <end position="237"/>
    </location>
</feature>
<feature type="helix" evidence="4">
    <location>
        <begin position="238"/>
        <end position="241"/>
    </location>
</feature>
<reference key="1">
    <citation type="journal article" date="2003" name="Nature">
        <title>Genome divergence in two Prochlorococcus ecotypes reflects oceanic niche differentiation.</title>
        <authorList>
            <person name="Rocap G."/>
            <person name="Larimer F.W."/>
            <person name="Lamerdin J.E."/>
            <person name="Malfatti S."/>
            <person name="Chain P."/>
            <person name="Ahlgren N.A."/>
            <person name="Arellano A."/>
            <person name="Coleman M."/>
            <person name="Hauser L."/>
            <person name="Hess W.R."/>
            <person name="Johnson Z.I."/>
            <person name="Land M.L."/>
            <person name="Lindell D."/>
            <person name="Post A.F."/>
            <person name="Regala W."/>
            <person name="Shah M."/>
            <person name="Shaw S.L."/>
            <person name="Steglich C."/>
            <person name="Sullivan M.B."/>
            <person name="Ting C.S."/>
            <person name="Tolonen A."/>
            <person name="Webb E.A."/>
            <person name="Zinser E.R."/>
            <person name="Chisholm S.W."/>
        </authorList>
    </citation>
    <scope>NUCLEOTIDE SEQUENCE [LARGE SCALE GENOMIC DNA]</scope>
    <source>
        <strain>MIT 9313</strain>
    </source>
</reference>
<reference key="2">
    <citation type="journal article" date="2010" name="Science">
        <title>Microbial biosynthesis of alkanes.</title>
        <authorList>
            <person name="Schirmer A."/>
            <person name="Rude M.A."/>
            <person name="Li X."/>
            <person name="Popova E."/>
            <person name="del Cardayre S.B."/>
        </authorList>
    </citation>
    <scope>FUNCTION</scope>
</reference>
<reference key="3">
    <citation type="submission" date="2006-12" db="PDB data bank">
        <title>Crystal structure of hypothetical protein (NP_895059.1) from Prochlorococcus marinus MIT9313 at 1.68 A resolution.</title>
        <authorList>
            <consortium name="Joint Center for Structural Genomics (JCSG)"/>
        </authorList>
    </citation>
    <scope>X-RAY CRYSTALLOGRAPHY (1.68 ANGSTROMS) IN COMPLEX WITH IRON</scope>
</reference>
<evidence type="ECO:0000255" key="1">
    <source>
        <dbReference type="HAMAP-Rule" id="MF_00931"/>
    </source>
</evidence>
<evidence type="ECO:0000269" key="2">
    <source>
    </source>
</evidence>
<evidence type="ECO:0000269" key="3">
    <source ref="3"/>
</evidence>
<evidence type="ECO:0007829" key="4">
    <source>
        <dbReference type="PDB" id="4TW3"/>
    </source>
</evidence>
<keyword id="KW-0002">3D-structure</keyword>
<keyword id="KW-0408">Iron</keyword>
<keyword id="KW-0456">Lyase</keyword>
<keyword id="KW-0479">Metal-binding</keyword>
<keyword id="KW-0521">NADP</keyword>
<keyword id="KW-1185">Reference proteome</keyword>
<gene>
    <name type="ordered locus">PMT_1231</name>
</gene>
<accession>Q7V6D4</accession>
<comment type="function">
    <text evidence="1 2">Catalyzes the decarbonylation of fatty aldehydes to alkanes. Requires the presence of ferredoxin, ferredoxin reductase and NADPH for in vitro decarbonylase activity (By similarity). Involved in the biosynthesis of alkanes, mainly heptadecane and pentadecane.</text>
</comment>
<comment type="catalytic activity">
    <reaction evidence="1">
        <text>a long-chain fatty aldehyde + 2 NADPH + O2 + H(+) = a long-chain alkane + formate + 2 NADP(+) + H2O</text>
        <dbReference type="Rhea" id="RHEA:21440"/>
        <dbReference type="ChEBI" id="CHEBI:15377"/>
        <dbReference type="ChEBI" id="CHEBI:15378"/>
        <dbReference type="ChEBI" id="CHEBI:15379"/>
        <dbReference type="ChEBI" id="CHEBI:15740"/>
        <dbReference type="ChEBI" id="CHEBI:17176"/>
        <dbReference type="ChEBI" id="CHEBI:57783"/>
        <dbReference type="ChEBI" id="CHEBI:58349"/>
        <dbReference type="ChEBI" id="CHEBI:83563"/>
        <dbReference type="EC" id="4.1.99.5"/>
    </reaction>
</comment>
<comment type="cofactor">
    <text>Binds 2 metal cations per subunit. The catalytic dinuclear metal-binding site could be either a di-iron or a manganese-iron cofactor.</text>
</comment>
<comment type="similarity">
    <text evidence="1">Belongs to the aldehyde decarbonylase family.</text>
</comment>
<dbReference type="EC" id="4.1.99.5" evidence="1"/>
<dbReference type="EMBL" id="BX548175">
    <property type="protein sequence ID" value="CAE21406.1"/>
    <property type="molecule type" value="Genomic_DNA"/>
</dbReference>
<dbReference type="RefSeq" id="WP_011130600.1">
    <property type="nucleotide sequence ID" value="NC_005071.1"/>
</dbReference>
<dbReference type="PDB" id="2OC5">
    <property type="method" value="X-ray"/>
    <property type="resolution" value="1.68 A"/>
    <property type="chains" value="A=1-243"/>
</dbReference>
<dbReference type="PDB" id="4KVQ">
    <property type="method" value="X-ray"/>
    <property type="resolution" value="1.84 A"/>
    <property type="chains" value="A=1-243"/>
</dbReference>
<dbReference type="PDB" id="4KVR">
    <property type="method" value="X-ray"/>
    <property type="resolution" value="1.88 A"/>
    <property type="chains" value="A=1-243"/>
</dbReference>
<dbReference type="PDB" id="4KVS">
    <property type="method" value="X-ray"/>
    <property type="resolution" value="1.67 A"/>
    <property type="chains" value="A=1-243"/>
</dbReference>
<dbReference type="PDB" id="4PG0">
    <property type="method" value="X-ray"/>
    <property type="resolution" value="1.90 A"/>
    <property type="chains" value="A=1-243"/>
</dbReference>
<dbReference type="PDB" id="4PG1">
    <property type="method" value="X-ray"/>
    <property type="resolution" value="1.70 A"/>
    <property type="chains" value="A=2-243"/>
</dbReference>
<dbReference type="PDB" id="4PGI">
    <property type="method" value="X-ray"/>
    <property type="resolution" value="2.08 A"/>
    <property type="chains" value="A=1-243"/>
</dbReference>
<dbReference type="PDB" id="4PGK">
    <property type="method" value="X-ray"/>
    <property type="resolution" value="2.17 A"/>
    <property type="chains" value="A=1-243"/>
</dbReference>
<dbReference type="PDB" id="4TW3">
    <property type="method" value="X-ray"/>
    <property type="resolution" value="1.60 A"/>
    <property type="chains" value="A=21-243"/>
</dbReference>
<dbReference type="PDBsum" id="2OC5"/>
<dbReference type="PDBsum" id="4KVQ"/>
<dbReference type="PDBsum" id="4KVR"/>
<dbReference type="PDBsum" id="4KVS"/>
<dbReference type="PDBsum" id="4PG0"/>
<dbReference type="PDBsum" id="4PG1"/>
<dbReference type="PDBsum" id="4PGI"/>
<dbReference type="PDBsum" id="4PGK"/>
<dbReference type="PDBsum" id="4TW3"/>
<dbReference type="SMR" id="Q7V6D4"/>
<dbReference type="DNASU" id="1728804"/>
<dbReference type="KEGG" id="pmt:PMT_1231"/>
<dbReference type="eggNOG" id="COG3396">
    <property type="taxonomic scope" value="Bacteria"/>
</dbReference>
<dbReference type="HOGENOM" id="CLU_1106729_0_0_3"/>
<dbReference type="OrthoDB" id="482319at2"/>
<dbReference type="BioCyc" id="MetaCyc:MONOMER-17306"/>
<dbReference type="BRENDA" id="4.1.99.5">
    <property type="organism ID" value="5023"/>
</dbReference>
<dbReference type="EvolutionaryTrace" id="Q7V6D4"/>
<dbReference type="Proteomes" id="UP000001423">
    <property type="component" value="Chromosome"/>
</dbReference>
<dbReference type="GO" id="GO:0071771">
    <property type="term" value="F:aldehyde oxygenase (deformylating) activity"/>
    <property type="evidence" value="ECO:0007669"/>
    <property type="project" value="UniProtKB-UniRule"/>
</dbReference>
<dbReference type="GO" id="GO:0046914">
    <property type="term" value="F:transition metal ion binding"/>
    <property type="evidence" value="ECO:0007669"/>
    <property type="project" value="UniProtKB-UniRule"/>
</dbReference>
<dbReference type="CDD" id="cd00657">
    <property type="entry name" value="Ferritin_like"/>
    <property type="match status" value="1"/>
</dbReference>
<dbReference type="Gene3D" id="1.20.1260.10">
    <property type="match status" value="1"/>
</dbReference>
<dbReference type="HAMAP" id="MF_00931">
    <property type="entry name" value="Aldeh_decarbonylase"/>
    <property type="match status" value="1"/>
</dbReference>
<dbReference type="InterPro" id="IPR022612">
    <property type="entry name" value="Ald_deCOase"/>
</dbReference>
<dbReference type="InterPro" id="IPR012347">
    <property type="entry name" value="Ferritin-like"/>
</dbReference>
<dbReference type="InterPro" id="IPR009078">
    <property type="entry name" value="Ferritin-like_SF"/>
</dbReference>
<dbReference type="NCBIfam" id="TIGR04059">
    <property type="entry name" value="Ald_deCOase"/>
    <property type="match status" value="1"/>
</dbReference>
<dbReference type="Pfam" id="PF11266">
    <property type="entry name" value="Ald_deCOase"/>
    <property type="match status" value="1"/>
</dbReference>
<dbReference type="SUPFAM" id="SSF47240">
    <property type="entry name" value="Ferritin-like"/>
    <property type="match status" value="1"/>
</dbReference>
<proteinExistence type="evidence at protein level"/>
<name>ALDEC_PROMM</name>
<protein>
    <recommendedName>
        <fullName evidence="1">Aldehyde decarbonylase</fullName>
        <shortName evidence="1">AD</shortName>
        <ecNumber evidence="1">4.1.99.5</ecNumber>
    </recommendedName>
    <alternativeName>
        <fullName evidence="1">Fatty aldehyde decarbonylase</fullName>
    </alternativeName>
</protein>